<evidence type="ECO:0000250" key="1"/>
<evidence type="ECO:0000256" key="2">
    <source>
        <dbReference type="SAM" id="MobiDB-lite"/>
    </source>
</evidence>
<evidence type="ECO:0000305" key="3"/>
<name>SIS2_CANTR</name>
<comment type="function">
    <text evidence="1">May stimulate expression of certain genes that are periodically expressed during late G1. Also modulates the expression of the ENA1 ATPase (By similarity).</text>
</comment>
<comment type="subcellular location">
    <subcellularLocation>
        <location evidence="1">Nucleus</location>
    </subcellularLocation>
    <subcellularLocation>
        <location evidence="1">Cytoplasm</location>
    </subcellularLocation>
</comment>
<comment type="similarity">
    <text evidence="3">Belongs to the HFCD (homooligomeric flavin containing Cys decarboxylase) superfamily.</text>
</comment>
<dbReference type="EMBL" id="X88900">
    <property type="protein sequence ID" value="CAA61362.1"/>
    <property type="molecule type" value="Genomic_DNA"/>
</dbReference>
<dbReference type="PIR" id="S57752">
    <property type="entry name" value="S57752"/>
</dbReference>
<dbReference type="SMR" id="Q12600"/>
<dbReference type="VEuPathDB" id="FungiDB:CTMYA2_009710"/>
<dbReference type="VEuPathDB" id="FungiDB:CTRG_05660"/>
<dbReference type="GO" id="GO:0005634">
    <property type="term" value="C:nucleus"/>
    <property type="evidence" value="ECO:0007669"/>
    <property type="project" value="UniProtKB-SubCell"/>
</dbReference>
<dbReference type="GO" id="GO:0071513">
    <property type="term" value="C:phosphopantothenoylcysteine decarboxylase complex"/>
    <property type="evidence" value="ECO:0007669"/>
    <property type="project" value="TreeGrafter"/>
</dbReference>
<dbReference type="GO" id="GO:0010181">
    <property type="term" value="F:FMN binding"/>
    <property type="evidence" value="ECO:0007669"/>
    <property type="project" value="TreeGrafter"/>
</dbReference>
<dbReference type="GO" id="GO:0004633">
    <property type="term" value="F:phosphopantothenoylcysteine decarboxylase activity"/>
    <property type="evidence" value="ECO:0007669"/>
    <property type="project" value="TreeGrafter"/>
</dbReference>
<dbReference type="GO" id="GO:0015937">
    <property type="term" value="P:coenzyme A biosynthetic process"/>
    <property type="evidence" value="ECO:0007669"/>
    <property type="project" value="TreeGrafter"/>
</dbReference>
<dbReference type="Gene3D" id="3.40.50.1950">
    <property type="entry name" value="Flavin prenyltransferase-like"/>
    <property type="match status" value="1"/>
</dbReference>
<dbReference type="InterPro" id="IPR036551">
    <property type="entry name" value="Flavin_trans-like"/>
</dbReference>
<dbReference type="InterPro" id="IPR003382">
    <property type="entry name" value="Flavoprotein"/>
</dbReference>
<dbReference type="PANTHER" id="PTHR14359">
    <property type="entry name" value="HOMO-OLIGOMERIC FLAVIN CONTAINING CYS DECARBOXYLASE FAMILY"/>
    <property type="match status" value="1"/>
</dbReference>
<dbReference type="PANTHER" id="PTHR14359:SF17">
    <property type="entry name" value="PHOSPHOPANTOTHENOYLCYSTEINE DECARBOXYLASE SUBUNIT SIS2-RELATED"/>
    <property type="match status" value="1"/>
</dbReference>
<dbReference type="Pfam" id="PF02441">
    <property type="entry name" value="Flavoprotein"/>
    <property type="match status" value="1"/>
</dbReference>
<dbReference type="SUPFAM" id="SSF52507">
    <property type="entry name" value="Homo-oligomeric flavin-containing Cys decarboxylases, HFCD"/>
    <property type="match status" value="1"/>
</dbReference>
<proteinExistence type="inferred from homology"/>
<accession>Q12600</accession>
<feature type="chain" id="PRO_0000182036" description="Protein SIS2">
    <location>
        <begin position="1"/>
        <end position="531"/>
    </location>
</feature>
<feature type="region of interest" description="Disordered" evidence="2">
    <location>
        <begin position="1"/>
        <end position="42"/>
    </location>
</feature>
<feature type="region of interest" description="Disordered" evidence="2">
    <location>
        <begin position="88"/>
        <end position="127"/>
    </location>
</feature>
<feature type="region of interest" description="Disordered" evidence="2">
    <location>
        <begin position="139"/>
        <end position="168"/>
    </location>
</feature>
<feature type="region of interest" description="Disordered" evidence="2">
    <location>
        <begin position="180"/>
        <end position="261"/>
    </location>
</feature>
<feature type="region of interest" description="Disordered" evidence="2">
    <location>
        <begin position="461"/>
        <end position="531"/>
    </location>
</feature>
<feature type="compositionally biased region" description="Basic and acidic residues" evidence="2">
    <location>
        <begin position="1"/>
        <end position="20"/>
    </location>
</feature>
<feature type="compositionally biased region" description="Polar residues" evidence="2">
    <location>
        <begin position="155"/>
        <end position="168"/>
    </location>
</feature>
<feature type="compositionally biased region" description="Low complexity" evidence="2">
    <location>
        <begin position="183"/>
        <end position="198"/>
    </location>
</feature>
<feature type="compositionally biased region" description="Gly residues" evidence="2">
    <location>
        <begin position="204"/>
        <end position="213"/>
    </location>
</feature>
<feature type="compositionally biased region" description="Low complexity" evidence="2">
    <location>
        <begin position="214"/>
        <end position="249"/>
    </location>
</feature>
<feature type="compositionally biased region" description="Acidic residues" evidence="2">
    <location>
        <begin position="462"/>
        <end position="472"/>
    </location>
</feature>
<feature type="compositionally biased region" description="Acidic residues" evidence="2">
    <location>
        <begin position="481"/>
        <end position="514"/>
    </location>
</feature>
<keyword id="KW-0963">Cytoplasm</keyword>
<keyword id="KW-0539">Nucleus</keyword>
<protein>
    <recommendedName>
        <fullName>Protein SIS2</fullName>
    </recommendedName>
    <alternativeName>
        <fullName>Halotolerance protein HAL3</fullName>
    </alternativeName>
</protein>
<organism>
    <name type="scientific">Candida tropicalis</name>
    <name type="common">Yeast</name>
    <dbReference type="NCBI Taxonomy" id="5482"/>
    <lineage>
        <taxon>Eukaryota</taxon>
        <taxon>Fungi</taxon>
        <taxon>Dikarya</taxon>
        <taxon>Ascomycota</taxon>
        <taxon>Saccharomycotina</taxon>
        <taxon>Pichiomycetes</taxon>
        <taxon>Debaryomycetaceae</taxon>
        <taxon>Candida/Lodderomyces clade</taxon>
        <taxon>Candida</taxon>
    </lineage>
</organism>
<sequence>MPSDKDIKSPAQPKKEEEIPKSILTRISSPPPILNQPDANIIHHPQPQVPQSSLNIPGIKLSPQISTSLENREIVMAGGAYLKERMESPDSLNHKPTLLQPDKSESIPSIDYTLNPPKESQHHKSPSVHAHFYVEETLRPVRNRSRSGSNSNNNLTPITSPQHSEPSSILNKDAIKSQESLRATTNSISSAAASNQSTPRSIISGGGGGGGGANTATSSNSTTSNTALAAQGTTTTTTTTNSNSNTTTTKGEQNSNIDPRLPQDDGKFHVLIGVCGALSVGKVKLIVNKLLEIYTSDKISIQVILTKSSENFLLPETLNVLENVKKVRVWTDIDEWTTWKTRLDPVLHIELRRWADILLVCPLTANTLAKISLGICDNLLTNVIRAWNSSYPILLAPAMDSHSYSSSTTKRQLRLIADDMPWIEVLKPLEKVFGSYGDIGMGGMTDWNEIVNRIVMKLGGYPEDEDEDEADDSKDNIDESAIIDDDDDDDDDDDDDDDDDDDDDDDDDDDEEDPPQQQSTTDNSKDETTNL</sequence>
<gene>
    <name type="primary">SIS2</name>
    <name type="synonym">HAL3</name>
</gene>
<reference key="1">
    <citation type="journal article" date="1996" name="Yeast">
        <title>CtCdc55p and CtHa13p: two putative regulatory proteins from Candida tropicalis with long acidic domains.</title>
        <authorList>
            <person name="Rodriguez P.L."/>
            <person name="Ali R."/>
            <person name="Serrano R."/>
        </authorList>
    </citation>
    <scope>NUCLEOTIDE SEQUENCE [GENOMIC DNA]</scope>
    <source>
        <strain>NCYC 2512</strain>
    </source>
</reference>